<keyword id="KW-0093">Biotin biosynthesis</keyword>
<keyword id="KW-0963">Cytoplasm</keyword>
<keyword id="KW-0378">Hydrolase</keyword>
<keyword id="KW-0719">Serine esterase</keyword>
<comment type="function">
    <text evidence="2">The physiological role of BioH is to remove the methyl group introduced by BioC when the pimeloyl moiety is complete. It allows to synthesize pimeloyl-ACP via the fatty acid synthetic pathway through the hydrolysis of the ester bonds of pimeloyl-ACP esters.</text>
</comment>
<comment type="catalytic activity">
    <reaction evidence="2">
        <text>6-carboxyhexanoyl-[ACP] methyl ester + H2O = 6-carboxyhexanoyl-[ACP] + methanol + H(+)</text>
        <dbReference type="Rhea" id="RHEA:42700"/>
        <dbReference type="Rhea" id="RHEA-COMP:9955"/>
        <dbReference type="Rhea" id="RHEA-COMP:10186"/>
        <dbReference type="ChEBI" id="CHEBI:15377"/>
        <dbReference type="ChEBI" id="CHEBI:15378"/>
        <dbReference type="ChEBI" id="CHEBI:17790"/>
        <dbReference type="ChEBI" id="CHEBI:78846"/>
        <dbReference type="ChEBI" id="CHEBI:82735"/>
        <dbReference type="EC" id="3.1.1.85"/>
    </reaction>
</comment>
<comment type="pathway">
    <text evidence="2">Cofactor biosynthesis; biotin biosynthesis.</text>
</comment>
<comment type="subunit">
    <text evidence="2">Monomer.</text>
</comment>
<comment type="subcellular location">
    <subcellularLocation>
        <location evidence="2">Cytoplasm</location>
    </subcellularLocation>
</comment>
<comment type="similarity">
    <text evidence="2">Belongs to the AB hydrolase superfamily. Carboxylesterase BioH family.</text>
</comment>
<reference key="1">
    <citation type="submission" date="2008-02" db="EMBL/GenBank/DDBJ databases">
        <title>Complete sequence of Escherichia coli C str. ATCC 8739.</title>
        <authorList>
            <person name="Copeland A."/>
            <person name="Lucas S."/>
            <person name="Lapidus A."/>
            <person name="Glavina del Rio T."/>
            <person name="Dalin E."/>
            <person name="Tice H."/>
            <person name="Bruce D."/>
            <person name="Goodwin L."/>
            <person name="Pitluck S."/>
            <person name="Kiss H."/>
            <person name="Brettin T."/>
            <person name="Detter J.C."/>
            <person name="Han C."/>
            <person name="Kuske C.R."/>
            <person name="Schmutz J."/>
            <person name="Larimer F."/>
            <person name="Land M."/>
            <person name="Hauser L."/>
            <person name="Kyrpides N."/>
            <person name="Mikhailova N."/>
            <person name="Ingram L."/>
            <person name="Richardson P."/>
        </authorList>
    </citation>
    <scope>NUCLEOTIDE SEQUENCE [LARGE SCALE GENOMIC DNA]</scope>
    <source>
        <strain>ATCC 8739 / DSM 1576 / NBRC 3972 / NCIMB 8545 / WDCM 00012 / Crooks</strain>
    </source>
</reference>
<dbReference type="EC" id="3.1.1.85" evidence="2"/>
<dbReference type="EMBL" id="CP000946">
    <property type="protein sequence ID" value="ACA75979.1"/>
    <property type="molecule type" value="Genomic_DNA"/>
</dbReference>
<dbReference type="RefSeq" id="WP_001060071.1">
    <property type="nucleotide sequence ID" value="NZ_MTFT01000001.1"/>
</dbReference>
<dbReference type="SMR" id="B1IP53"/>
<dbReference type="ESTHER" id="ecoli-bioh">
    <property type="family name" value="BioH"/>
</dbReference>
<dbReference type="MEROPS" id="S33.994"/>
<dbReference type="GeneID" id="75202255"/>
<dbReference type="KEGG" id="ecl:EcolC_0301"/>
<dbReference type="HOGENOM" id="CLU_020336_12_2_6"/>
<dbReference type="UniPathway" id="UPA00078"/>
<dbReference type="GO" id="GO:0005737">
    <property type="term" value="C:cytoplasm"/>
    <property type="evidence" value="ECO:0007669"/>
    <property type="project" value="UniProtKB-SubCell"/>
</dbReference>
<dbReference type="GO" id="GO:0090499">
    <property type="term" value="F:pimelyl-[acyl-carrier protein] methyl ester esterase activity"/>
    <property type="evidence" value="ECO:0007669"/>
    <property type="project" value="UniProtKB-EC"/>
</dbReference>
<dbReference type="GO" id="GO:0009102">
    <property type="term" value="P:biotin biosynthetic process"/>
    <property type="evidence" value="ECO:0007669"/>
    <property type="project" value="UniProtKB-UniRule"/>
</dbReference>
<dbReference type="FunFam" id="3.40.50.1820:FF:000045">
    <property type="entry name" value="Pimeloyl-[acyl-carrier protein] methyl ester esterase"/>
    <property type="match status" value="1"/>
</dbReference>
<dbReference type="Gene3D" id="3.40.50.1820">
    <property type="entry name" value="alpha/beta hydrolase"/>
    <property type="match status" value="1"/>
</dbReference>
<dbReference type="HAMAP" id="MF_01260">
    <property type="entry name" value="Carboxylester"/>
    <property type="match status" value="1"/>
</dbReference>
<dbReference type="InterPro" id="IPR000073">
    <property type="entry name" value="AB_hydrolase_1"/>
</dbReference>
<dbReference type="InterPro" id="IPR029058">
    <property type="entry name" value="AB_hydrolase_fold"/>
</dbReference>
<dbReference type="InterPro" id="IPR010076">
    <property type="entry name" value="BioH"/>
</dbReference>
<dbReference type="InterPro" id="IPR050228">
    <property type="entry name" value="Carboxylesterase_BioH"/>
</dbReference>
<dbReference type="NCBIfam" id="TIGR01738">
    <property type="entry name" value="bioH"/>
    <property type="match status" value="1"/>
</dbReference>
<dbReference type="NCBIfam" id="NF007674">
    <property type="entry name" value="PRK10349.1"/>
    <property type="match status" value="1"/>
</dbReference>
<dbReference type="PANTHER" id="PTHR43194">
    <property type="entry name" value="HYDROLASE ALPHA/BETA FOLD FAMILY"/>
    <property type="match status" value="1"/>
</dbReference>
<dbReference type="PANTHER" id="PTHR43194:SF5">
    <property type="entry name" value="PIMELOYL-[ACYL-CARRIER PROTEIN] METHYL ESTER ESTERASE"/>
    <property type="match status" value="1"/>
</dbReference>
<dbReference type="Pfam" id="PF00561">
    <property type="entry name" value="Abhydrolase_1"/>
    <property type="match status" value="1"/>
</dbReference>
<dbReference type="SUPFAM" id="SSF53474">
    <property type="entry name" value="alpha/beta-Hydrolases"/>
    <property type="match status" value="1"/>
</dbReference>
<accession>B1IP53</accession>
<organism>
    <name type="scientific">Escherichia coli (strain ATCC 8739 / DSM 1576 / NBRC 3972 / NCIMB 8545 / WDCM 00012 / Crooks)</name>
    <dbReference type="NCBI Taxonomy" id="481805"/>
    <lineage>
        <taxon>Bacteria</taxon>
        <taxon>Pseudomonadati</taxon>
        <taxon>Pseudomonadota</taxon>
        <taxon>Gammaproteobacteria</taxon>
        <taxon>Enterobacterales</taxon>
        <taxon>Enterobacteriaceae</taxon>
        <taxon>Escherichia</taxon>
    </lineage>
</organism>
<gene>
    <name evidence="2" type="primary">bioH</name>
    <name type="ordered locus">EcolC_0301</name>
</gene>
<sequence length="256" mass="28533">MNNIWWQTKGQGNVHLVLLHGWGLNAEVWRCIDEELSSHFTLHLVDLPGFGRSRGFGALSLADMAEAVLQQAPDKAIWLGWSLGGLVASQIALTHPERVQALVTVASSPCFSARDEWPGIKPDVLAGFQQQLSDDFQRTVERFLALQTMGTETARQDARALKKTVLALPMPEVDVLNGGLEILKTVDLRQPLQNVSMPFLRLYGYLDGLVPRKVVPMLDKLWPHSESYIFAKAAHAPFISHPVEFCHLLVALKQRV</sequence>
<name>BIOH_ECOLC</name>
<protein>
    <recommendedName>
        <fullName evidence="2">Pimeloyl-[acyl-carrier protein] methyl ester esterase</fullName>
        <ecNumber evidence="2">3.1.1.85</ecNumber>
    </recommendedName>
    <alternativeName>
        <fullName evidence="2">Biotin synthesis protein BioH</fullName>
    </alternativeName>
    <alternativeName>
        <fullName evidence="2">Carboxylesterase BioH</fullName>
    </alternativeName>
</protein>
<evidence type="ECO:0000255" key="1"/>
<evidence type="ECO:0000255" key="2">
    <source>
        <dbReference type="HAMAP-Rule" id="MF_01260"/>
    </source>
</evidence>
<feature type="chain" id="PRO_1000085808" description="Pimeloyl-[acyl-carrier protein] methyl ester esterase">
    <location>
        <begin position="1"/>
        <end position="256"/>
    </location>
</feature>
<feature type="domain" description="AB hydrolase-1" evidence="1">
    <location>
        <begin position="15"/>
        <end position="242"/>
    </location>
</feature>
<feature type="active site" description="Nucleophile" evidence="2">
    <location>
        <position position="82"/>
    </location>
</feature>
<feature type="active site" evidence="2">
    <location>
        <position position="207"/>
    </location>
</feature>
<feature type="active site" evidence="2">
    <location>
        <position position="235"/>
    </location>
</feature>
<feature type="binding site" evidence="2">
    <location>
        <position position="22"/>
    </location>
    <ligand>
        <name>substrate</name>
    </ligand>
</feature>
<feature type="binding site" evidence="2">
    <location>
        <begin position="82"/>
        <end position="83"/>
    </location>
    <ligand>
        <name>substrate</name>
    </ligand>
</feature>
<feature type="binding site" evidence="2">
    <location>
        <begin position="143"/>
        <end position="147"/>
    </location>
    <ligand>
        <name>substrate</name>
    </ligand>
</feature>
<feature type="binding site" evidence="2">
    <location>
        <position position="235"/>
    </location>
    <ligand>
        <name>substrate</name>
    </ligand>
</feature>
<proteinExistence type="inferred from homology"/>